<evidence type="ECO:0000255" key="1"/>
<evidence type="ECO:0000269" key="2">
    <source ref="2"/>
</evidence>
<evidence type="ECO:0000305" key="3"/>
<feature type="chain" id="PRO_0000425270" description="Beta-monoglucosyldiacylglycerol synthase">
    <location>
        <begin position="1"/>
        <end position="468"/>
    </location>
</feature>
<feature type="transmembrane region" description="Helical" evidence="1">
    <location>
        <begin position="51"/>
        <end position="71"/>
    </location>
</feature>
<feature type="transmembrane region" description="Helical" evidence="1">
    <location>
        <begin position="72"/>
        <end position="92"/>
    </location>
</feature>
<feature type="transmembrane region" description="Helical" evidence="1">
    <location>
        <begin position="361"/>
        <end position="381"/>
    </location>
</feature>
<feature type="transmembrane region" description="Helical" evidence="1">
    <location>
        <begin position="387"/>
        <end position="407"/>
    </location>
</feature>
<name>BMGDS_TRIV2</name>
<sequence>MPANSWPDNDSYKELDPLNSLLSEVSTTEESVVETRDLSLPSRFQGRRGKAALVLTIVWSGTIALHLVSWGSIFILGLTTVLGIHALGVVFARPRHYQKEMQGSLPFVSILVAAKNEEAVIAKLARNLCNLEYPNGQYEVWIIDDNSSDKTPHILAELAKEYDKLKVLRRSAQATGGKSGALNQVLPLTQGEIIAVFDADAQVASDMLLHVVPLFQREKVGAVQVRKAIANAKENFWTKGQMAEMSLDIWFQQQRTALGGIGELRGNGQFVRRQALDSCGGWNEETITDDLDLTFRLHLDKWDIECLFYPAVQEEGVTTAIALWHQRNRWAEGGYQRYLDYWDLILKNRMGTRKTWDMLMFMLTMYILPTAAIPDLLMAVVRHRPPMLGPVTGLSVTMSVVGMFAGLRRIRQEQKFQVHTPFVLLLQTMRGTLYMLHWLVVMSSTTARMSFRPKRLKWVKTVHTGSGE</sequence>
<accession>Q3MB01</accession>
<comment type="function">
    <text evidence="2">Glucosyltransferase involved in the biosynthesis of the non-bilayer-forming membrane lipid beta-monoglucosyldiacylglycerol which contributes to regulate the properties and stability of the membrane. Catalyzes the transfer of a glucosyl residue from UDP-Glc to diacylglycerol (DAG) acceptor to form the corresponding beta-glucosyl-DAG (1,2-diacyl-3-O-(beta-D-glucopyranosyl)-sn-glycerol). It can only use UDP-Glc as sugar donor.</text>
</comment>
<comment type="catalytic activity">
    <reaction evidence="2">
        <text>a 1,2-diacyl-sn-glycerol + UDP-alpha-D-glucose = a 1,2-diacyl-3-O-(beta-D-glucopyranosyl)-sn-glycerol + UDP + H(+)</text>
        <dbReference type="Rhea" id="RHEA:17285"/>
        <dbReference type="ChEBI" id="CHEBI:15378"/>
        <dbReference type="ChEBI" id="CHEBI:17815"/>
        <dbReference type="ChEBI" id="CHEBI:58223"/>
        <dbReference type="ChEBI" id="CHEBI:58885"/>
        <dbReference type="ChEBI" id="CHEBI:75799"/>
        <dbReference type="EC" id="2.4.1.336"/>
    </reaction>
</comment>
<comment type="cofactor">
    <cofactor evidence="2">
        <name>Mg(2+)</name>
        <dbReference type="ChEBI" id="CHEBI:18420"/>
    </cofactor>
</comment>
<comment type="biophysicochemical properties">
    <kinetics>
        <KM evidence="2">45 uM for UDP-Glc</KM>
    </kinetics>
    <phDependence>
        <text evidence="2">Optimum pH is 7.</text>
    </phDependence>
    <temperatureDependence>
        <text evidence="2">The activity increases with temperature.</text>
    </temperatureDependence>
</comment>
<comment type="subcellular location">
    <subcellularLocation>
        <location evidence="3">Membrane</location>
        <topology evidence="3">Multi-pass membrane protein</topology>
    </subcellularLocation>
</comment>
<comment type="similarity">
    <text evidence="3">Belongs to the glycosyltransferase 2 family.</text>
</comment>
<protein>
    <recommendedName>
        <fullName>Beta-monoglucosyldiacylglycerol synthase</fullName>
        <shortName>Beta-MGS</shortName>
        <shortName>MGlcDAG synthase</shortName>
        <ecNumber evidence="2">2.4.1.336</ecNumber>
    </recommendedName>
    <alternativeName>
        <fullName>UDP-glucose:1,2-diacylglycerol 3-beta-D-glucosyltransferase</fullName>
    </alternativeName>
</protein>
<organism>
    <name type="scientific">Trichormus variabilis (strain ATCC 29413 / PCC 7937)</name>
    <name type="common">Anabaena variabilis</name>
    <dbReference type="NCBI Taxonomy" id="240292"/>
    <lineage>
        <taxon>Bacteria</taxon>
        <taxon>Bacillati</taxon>
        <taxon>Cyanobacteriota</taxon>
        <taxon>Cyanophyceae</taxon>
        <taxon>Nostocales</taxon>
        <taxon>Nostocaceae</taxon>
        <taxon>Trichormus</taxon>
    </lineage>
</organism>
<keyword id="KW-0119">Carbohydrate metabolism</keyword>
<keyword id="KW-0319">Glycerol metabolism</keyword>
<keyword id="KW-0328">Glycosyltransferase</keyword>
<keyword id="KW-0444">Lipid biosynthesis</keyword>
<keyword id="KW-0443">Lipid metabolism</keyword>
<keyword id="KW-0460">Magnesium</keyword>
<keyword id="KW-0472">Membrane</keyword>
<keyword id="KW-0808">Transferase</keyword>
<keyword id="KW-0812">Transmembrane</keyword>
<keyword id="KW-1133">Transmembrane helix</keyword>
<reference key="1">
    <citation type="journal article" date="2014" name="Stand. Genomic Sci.">
        <title>Complete genome sequence of Anabaena variabilis ATCC 29413.</title>
        <authorList>
            <person name="Thiel T."/>
            <person name="Pratte B.S."/>
            <person name="Zhong J."/>
            <person name="Goodwin L."/>
            <person name="Copeland A."/>
            <person name="Lucas S."/>
            <person name="Han C."/>
            <person name="Pitluck S."/>
            <person name="Land M.L."/>
            <person name="Kyrpides N.C."/>
            <person name="Woyke T."/>
        </authorList>
    </citation>
    <scope>NUCLEOTIDE SEQUENCE [LARGE SCALE GENOMIC DNA]</scope>
    <source>
        <strain>ATCC 29413 / PCC 7937</strain>
    </source>
</reference>
<reference key="2">
    <citation type="journal article" date="1982" name="Plant Cell Physiol.">
        <title>Lipid biosynthesis in the blue-green alga (cyanobacterium), Anabaena variabilis III. UDPglucose:diacylglycerol glucosyltransferase activity in vitro.</title>
        <authorList>
            <person name="Sato N."/>
            <person name="Murata M."/>
        </authorList>
    </citation>
    <scope>FUNCTION</scope>
    <scope>CATALYTIC ACTIVITY</scope>
    <scope>COFACTOR</scope>
    <scope>BIOPHYSICOCHEMICAL PROPERTIES</scope>
    <scope>SUBSTRATE SPECIFICITY</scope>
    <scope>SUBCELLULAR LOCATION</scope>
    <source>
        <strain>ATCC 29413 / PCC 7937</strain>
    </source>
</reference>
<proteinExistence type="evidence at protein level"/>
<dbReference type="EC" id="2.4.1.336" evidence="2"/>
<dbReference type="EMBL" id="CP000117">
    <property type="protein sequence ID" value="ABA21835.1"/>
    <property type="molecule type" value="Genomic_DNA"/>
</dbReference>
<dbReference type="SMR" id="Q3MB01"/>
<dbReference type="STRING" id="240292.Ava_2217"/>
<dbReference type="CAZy" id="GT2">
    <property type="family name" value="Glycosyltransferase Family 2"/>
</dbReference>
<dbReference type="KEGG" id="ava:Ava_2217"/>
<dbReference type="eggNOG" id="COG1215">
    <property type="taxonomic scope" value="Bacteria"/>
</dbReference>
<dbReference type="HOGENOM" id="CLU_037834_0_0_3"/>
<dbReference type="Proteomes" id="UP000002533">
    <property type="component" value="Chromosome"/>
</dbReference>
<dbReference type="GO" id="GO:0005886">
    <property type="term" value="C:plasma membrane"/>
    <property type="evidence" value="ECO:0007669"/>
    <property type="project" value="TreeGrafter"/>
</dbReference>
<dbReference type="GO" id="GO:0016758">
    <property type="term" value="F:hexosyltransferase activity"/>
    <property type="evidence" value="ECO:0000250"/>
    <property type="project" value="UniProtKB"/>
</dbReference>
<dbReference type="GO" id="GO:0000287">
    <property type="term" value="F:magnesium ion binding"/>
    <property type="evidence" value="ECO:0000250"/>
    <property type="project" value="UniProtKB"/>
</dbReference>
<dbReference type="GO" id="GO:0006071">
    <property type="term" value="P:glycerol metabolic process"/>
    <property type="evidence" value="ECO:0007669"/>
    <property type="project" value="UniProtKB-KW"/>
</dbReference>
<dbReference type="GO" id="GO:0046467">
    <property type="term" value="P:membrane lipid biosynthetic process"/>
    <property type="evidence" value="ECO:0000250"/>
    <property type="project" value="UniProtKB"/>
</dbReference>
<dbReference type="CDD" id="cd06423">
    <property type="entry name" value="CESA_like"/>
    <property type="match status" value="1"/>
</dbReference>
<dbReference type="FunFam" id="3.90.550.10:FF:000164">
    <property type="entry name" value="Beta-(1-3)-glucosyl transferase"/>
    <property type="match status" value="1"/>
</dbReference>
<dbReference type="Gene3D" id="3.90.550.10">
    <property type="entry name" value="Spore Coat Polysaccharide Biosynthesis Protein SpsA, Chain A"/>
    <property type="match status" value="1"/>
</dbReference>
<dbReference type="InterPro" id="IPR001173">
    <property type="entry name" value="Glyco_trans_2-like"/>
</dbReference>
<dbReference type="InterPro" id="IPR050321">
    <property type="entry name" value="Glycosyltr_2/OpgH_subfam"/>
</dbReference>
<dbReference type="InterPro" id="IPR029044">
    <property type="entry name" value="Nucleotide-diphossugar_trans"/>
</dbReference>
<dbReference type="PANTHER" id="PTHR43867">
    <property type="entry name" value="CELLULOSE SYNTHASE CATALYTIC SUBUNIT A [UDP-FORMING]"/>
    <property type="match status" value="1"/>
</dbReference>
<dbReference type="PANTHER" id="PTHR43867:SF2">
    <property type="entry name" value="CELLULOSE SYNTHASE CATALYTIC SUBUNIT A [UDP-FORMING]"/>
    <property type="match status" value="1"/>
</dbReference>
<dbReference type="Pfam" id="PF00535">
    <property type="entry name" value="Glycos_transf_2"/>
    <property type="match status" value="1"/>
</dbReference>
<dbReference type="SUPFAM" id="SSF53448">
    <property type="entry name" value="Nucleotide-diphospho-sugar transferases"/>
    <property type="match status" value="1"/>
</dbReference>
<gene>
    <name type="ordered locus">Ava_2217</name>
</gene>